<sequence length="36" mass="4144">GLIDVRCYDSRQCWIACKKVTGSTQGKCQNKQCRCY</sequence>
<comment type="function">
    <text>Augments responses to direct muscle stimulation probably by blocking calcium-activated potassium channels.</text>
</comment>
<comment type="subcellular location">
    <subcellularLocation>
        <location>Secreted</location>
    </subcellularLocation>
</comment>
<comment type="tissue specificity">
    <text>Expressed by the venom gland.</text>
</comment>
<comment type="domain">
    <text evidence="3">Has the structural arrangement of an alpha-helix connected to antiparallel beta-sheets by disulfide bonds (CS-alpha/beta).</text>
</comment>
<comment type="similarity">
    <text evidence="3">Belongs to the short scorpion toxin superfamily. Potassium channel inhibitor family. Alpha-KTx 16 subfamily.</text>
</comment>
<organism>
    <name type="scientific">Leiurus hebraeus</name>
    <name type="common">Hebrew deathstalker scorpion</name>
    <name type="synonym">Leiurus quinquestriatus hebraeus</name>
    <dbReference type="NCBI Taxonomy" id="2899558"/>
    <lineage>
        <taxon>Eukaryota</taxon>
        <taxon>Metazoa</taxon>
        <taxon>Ecdysozoa</taxon>
        <taxon>Arthropoda</taxon>
        <taxon>Chelicerata</taxon>
        <taxon>Arachnida</taxon>
        <taxon>Scorpiones</taxon>
        <taxon>Buthida</taxon>
        <taxon>Buthoidea</taxon>
        <taxon>Buthidae</taxon>
        <taxon>Leiurus</taxon>
    </lineage>
</organism>
<reference key="1">
    <citation type="journal article" date="1994" name="Toxicon">
        <title>Neuromuscular effects of some potassium channel blocking toxins from the venom of the scorpion Leiurus quinquestriatus hebreus.</title>
        <authorList>
            <person name="Marshall D.L."/>
            <person name="Vatanpour H."/>
            <person name="Harvey A.L."/>
            <person name="Boyot P."/>
            <person name="Pinkasfeld S."/>
            <person name="Doljansky Y."/>
            <person name="Bouet F."/>
            <person name="Menez A."/>
        </authorList>
    </citation>
    <scope>PROTEIN SEQUENCE</scope>
    <source>
        <tissue>Venom</tissue>
    </source>
</reference>
<proteinExistence type="evidence at protein level"/>
<feature type="peptide" id="PRO_0000044893" description="Potassium channel toxin alpha-KTx 16.5">
    <location>
        <begin position="1"/>
        <end position="36"/>
    </location>
</feature>
<feature type="region of interest" description="Interaction with Ca(2+)-activated K(+) channels" evidence="2">
    <location>
        <begin position="26"/>
        <end position="33"/>
    </location>
</feature>
<feature type="site" description="Basic residue of the functional dyad" evidence="1">
    <location>
        <position position="27"/>
    </location>
</feature>
<feature type="site" description="Aromatic residue of the functional dyad" evidence="1">
    <location>
        <position position="36"/>
    </location>
</feature>
<feature type="disulfide bond" evidence="1">
    <location>
        <begin position="7"/>
        <end position="28"/>
    </location>
</feature>
<feature type="disulfide bond" evidence="1">
    <location>
        <begin position="13"/>
        <end position="33"/>
    </location>
</feature>
<feature type="disulfide bond" evidence="1">
    <location>
        <begin position="17"/>
        <end position="35"/>
    </location>
</feature>
<protein>
    <recommendedName>
        <fullName>Potassium channel toxin alpha-KTx 16.5</fullName>
    </recommendedName>
    <alternativeName>
        <fullName>Lqh 15-1</fullName>
    </alternativeName>
    <alternativeName>
        <fullName>Toxin 15-1</fullName>
    </alternativeName>
    <alternativeName>
        <fullName>alpha-KTx 1.7</fullName>
    </alternativeName>
</protein>
<evidence type="ECO:0000250" key="1"/>
<evidence type="ECO:0000255" key="2"/>
<evidence type="ECO:0000305" key="3"/>
<accession>P45660</accession>
<dbReference type="SMR" id="P45660"/>
<dbReference type="GO" id="GO:0005576">
    <property type="term" value="C:extracellular region"/>
    <property type="evidence" value="ECO:0007669"/>
    <property type="project" value="UniProtKB-SubCell"/>
</dbReference>
<dbReference type="GO" id="GO:0008200">
    <property type="term" value="F:ion channel inhibitor activity"/>
    <property type="evidence" value="ECO:0007669"/>
    <property type="project" value="InterPro"/>
</dbReference>
<dbReference type="GO" id="GO:0015459">
    <property type="term" value="F:potassium channel regulator activity"/>
    <property type="evidence" value="ECO:0007669"/>
    <property type="project" value="UniProtKB-KW"/>
</dbReference>
<dbReference type="GO" id="GO:0090729">
    <property type="term" value="F:toxin activity"/>
    <property type="evidence" value="ECO:0007669"/>
    <property type="project" value="UniProtKB-KW"/>
</dbReference>
<dbReference type="Gene3D" id="3.30.30.10">
    <property type="entry name" value="Knottin, scorpion toxin-like"/>
    <property type="match status" value="1"/>
</dbReference>
<dbReference type="InterPro" id="IPR036574">
    <property type="entry name" value="Scorpion_toxin-like_sf"/>
</dbReference>
<dbReference type="InterPro" id="IPR001947">
    <property type="entry name" value="Scorpion_toxinS_K_inh"/>
</dbReference>
<dbReference type="Pfam" id="PF00451">
    <property type="entry name" value="Toxin_2"/>
    <property type="match status" value="1"/>
</dbReference>
<dbReference type="PRINTS" id="PR00286">
    <property type="entry name" value="CHARYBDTOXIN"/>
</dbReference>
<dbReference type="SUPFAM" id="SSF57095">
    <property type="entry name" value="Scorpion toxin-like"/>
    <property type="match status" value="1"/>
</dbReference>
<dbReference type="PROSITE" id="PS01138">
    <property type="entry name" value="SCORP_SHORT_TOXIN"/>
    <property type="match status" value="1"/>
</dbReference>
<keyword id="KW-1221">Calcium-activated potassium channel impairing toxin</keyword>
<keyword id="KW-0903">Direct protein sequencing</keyword>
<keyword id="KW-1015">Disulfide bond</keyword>
<keyword id="KW-0872">Ion channel impairing toxin</keyword>
<keyword id="KW-0528">Neurotoxin</keyword>
<keyword id="KW-0632">Potassium channel impairing toxin</keyword>
<keyword id="KW-0964">Secreted</keyword>
<keyword id="KW-0800">Toxin</keyword>
<name>KA165_LEIHE</name>